<comment type="function">
    <text evidence="1">Catalyzes the interconversion of 2-phosphoglycerate and 3-phosphoglycerate.</text>
</comment>
<comment type="catalytic activity">
    <reaction evidence="1">
        <text>(2R)-2-phosphoglycerate = (2R)-3-phosphoglycerate</text>
        <dbReference type="Rhea" id="RHEA:15901"/>
        <dbReference type="ChEBI" id="CHEBI:58272"/>
        <dbReference type="ChEBI" id="CHEBI:58289"/>
        <dbReference type="EC" id="5.4.2.12"/>
    </reaction>
</comment>
<comment type="pathway">
    <text evidence="1">Carbohydrate degradation; glycolysis; pyruvate from D-glyceraldehyde 3-phosphate: step 3/5.</text>
</comment>
<comment type="similarity">
    <text evidence="1">Belongs to the BPG-independent phosphoglycerate mutase family. A-PGAM subfamily.</text>
</comment>
<keyword id="KW-0002">3D-structure</keyword>
<keyword id="KW-0324">Glycolysis</keyword>
<keyword id="KW-0413">Isomerase</keyword>
<keyword id="KW-1185">Reference proteome</keyword>
<evidence type="ECO:0000255" key="1">
    <source>
        <dbReference type="HAMAP-Rule" id="MF_01402"/>
    </source>
</evidence>
<evidence type="ECO:0000256" key="2">
    <source>
        <dbReference type="SAM" id="MobiDB-lite"/>
    </source>
</evidence>
<evidence type="ECO:0007829" key="3">
    <source>
        <dbReference type="PDB" id="3KD8"/>
    </source>
</evidence>
<name>APGM_THEAC</name>
<proteinExistence type="evidence at protein level"/>
<gene>
    <name evidence="1" type="primary">apgM</name>
    <name type="ordered locus">Ta0413</name>
</gene>
<sequence>MMKSIILIVLDGLGDRPGSDLQNRTPLQAAFRPNLNWLASHGINGIMHPISPGIRCGSDTSHMSLLGYDPKVYYPGRGPFEALGLGMDIRPGDLAFRANFATNRDGVIVDRRAGRENKGNEELADAISLDMGEYSFRVKSGVEHRAALVVSGPDLSDMIGDSDPHREGLPPEKIRPTDPSGDRTAEVMNAYLEEARRILSDHRVNKERVKNGRLPGNELLVRSAGKVPAIPSFTEKNRMKGACVVGSPWLKGLCRLLRMDVFDVPGATGTVGSNYRGKIEKAVDLTSSHDFVLVNIKATDVAGHDGNYPLKRDVIEDIDRAMEPLKSIGDHAVICVTGDHSTPCSFKDHSGDPVPIVFYTDGVMNDGVHLFDELSSASGSLRITSYNVMDILMQLAGRSDKFGS</sequence>
<dbReference type="EC" id="5.4.2.12" evidence="1"/>
<dbReference type="EMBL" id="AL445064">
    <property type="protein sequence ID" value="CAC11555.1"/>
    <property type="molecule type" value="Genomic_DNA"/>
</dbReference>
<dbReference type="RefSeq" id="WP_010900840.1">
    <property type="nucleotide sequence ID" value="NC_002578.1"/>
</dbReference>
<dbReference type="PDB" id="3IDD">
    <property type="method" value="X-ray"/>
    <property type="resolution" value="2.80 A"/>
    <property type="chains" value="A/B=1-404"/>
</dbReference>
<dbReference type="PDB" id="3KD8">
    <property type="method" value="X-ray"/>
    <property type="resolution" value="2.60 A"/>
    <property type="chains" value="A/B=2-397"/>
</dbReference>
<dbReference type="PDBsum" id="3IDD"/>
<dbReference type="PDBsum" id="3KD8"/>
<dbReference type="SMR" id="Q9HL27"/>
<dbReference type="FunCoup" id="Q9HL27">
    <property type="interactions" value="123"/>
</dbReference>
<dbReference type="STRING" id="273075.gene:9571632"/>
<dbReference type="PaxDb" id="273075-Ta0413"/>
<dbReference type="DNASU" id="1456023"/>
<dbReference type="EnsemblBacteria" id="CAC11555">
    <property type="protein sequence ID" value="CAC11555"/>
    <property type="gene ID" value="CAC11555"/>
</dbReference>
<dbReference type="KEGG" id="tac:Ta0413"/>
<dbReference type="eggNOG" id="arCOG01696">
    <property type="taxonomic scope" value="Archaea"/>
</dbReference>
<dbReference type="HOGENOM" id="CLU_034906_2_0_2"/>
<dbReference type="InParanoid" id="Q9HL27"/>
<dbReference type="OrthoDB" id="52918at2157"/>
<dbReference type="BRENDA" id="5.4.2.12">
    <property type="organism ID" value="6324"/>
</dbReference>
<dbReference type="UniPathway" id="UPA00109">
    <property type="reaction ID" value="UER00186"/>
</dbReference>
<dbReference type="EvolutionaryTrace" id="Q9HL27"/>
<dbReference type="Proteomes" id="UP000001024">
    <property type="component" value="Chromosome"/>
</dbReference>
<dbReference type="GO" id="GO:0046872">
    <property type="term" value="F:metal ion binding"/>
    <property type="evidence" value="ECO:0007669"/>
    <property type="project" value="InterPro"/>
</dbReference>
<dbReference type="GO" id="GO:0004619">
    <property type="term" value="F:phosphoglycerate mutase activity"/>
    <property type="evidence" value="ECO:0007669"/>
    <property type="project" value="UniProtKB-EC"/>
</dbReference>
<dbReference type="GO" id="GO:0006096">
    <property type="term" value="P:glycolytic process"/>
    <property type="evidence" value="ECO:0007669"/>
    <property type="project" value="UniProtKB-UniRule"/>
</dbReference>
<dbReference type="CDD" id="cd16011">
    <property type="entry name" value="iPGM_like"/>
    <property type="match status" value="1"/>
</dbReference>
<dbReference type="Gene3D" id="3.40.720.10">
    <property type="entry name" value="Alkaline Phosphatase, subunit A"/>
    <property type="match status" value="1"/>
</dbReference>
<dbReference type="Gene3D" id="3.30.70.2130">
    <property type="entry name" value="Metalloenzyme domain"/>
    <property type="match status" value="1"/>
</dbReference>
<dbReference type="HAMAP" id="MF_01402_A">
    <property type="entry name" value="ApgM_A"/>
    <property type="match status" value="1"/>
</dbReference>
<dbReference type="InterPro" id="IPR017850">
    <property type="entry name" value="Alkaline_phosphatase_core_sf"/>
</dbReference>
<dbReference type="InterPro" id="IPR023665">
    <property type="entry name" value="ApgAM_prokaryotes"/>
</dbReference>
<dbReference type="InterPro" id="IPR006124">
    <property type="entry name" value="Metalloenzyme"/>
</dbReference>
<dbReference type="InterPro" id="IPR004456">
    <property type="entry name" value="Pglycerate_mutase_ApgM"/>
</dbReference>
<dbReference type="InterPro" id="IPR042253">
    <property type="entry name" value="Pglycerate_mutase_ApgM_sf"/>
</dbReference>
<dbReference type="NCBIfam" id="TIGR00306">
    <property type="entry name" value="apgM"/>
    <property type="match status" value="1"/>
</dbReference>
<dbReference type="NCBIfam" id="NF003104">
    <property type="entry name" value="PRK04024.1"/>
    <property type="match status" value="1"/>
</dbReference>
<dbReference type="PANTHER" id="PTHR31209">
    <property type="entry name" value="COFACTOR-INDEPENDENT PHOSPHOGLYCERATE MUTASE"/>
    <property type="match status" value="1"/>
</dbReference>
<dbReference type="PANTHER" id="PTHR31209:SF0">
    <property type="entry name" value="METALLOENZYME DOMAIN-CONTAINING PROTEIN"/>
    <property type="match status" value="1"/>
</dbReference>
<dbReference type="Pfam" id="PF01676">
    <property type="entry name" value="Metalloenzyme"/>
    <property type="match status" value="1"/>
</dbReference>
<dbReference type="Pfam" id="PF10143">
    <property type="entry name" value="PhosphMutase"/>
    <property type="match status" value="1"/>
</dbReference>
<dbReference type="PIRSF" id="PIRSF006392">
    <property type="entry name" value="IPGAM_arch"/>
    <property type="match status" value="1"/>
</dbReference>
<dbReference type="SUPFAM" id="SSF53649">
    <property type="entry name" value="Alkaline phosphatase-like"/>
    <property type="match status" value="1"/>
</dbReference>
<feature type="chain" id="PRO_0000138150" description="2,3-bisphosphoglycerate-independent phosphoglycerate mutase">
    <location>
        <begin position="1"/>
        <end position="404"/>
    </location>
</feature>
<feature type="region of interest" description="Disordered" evidence="2">
    <location>
        <begin position="155"/>
        <end position="183"/>
    </location>
</feature>
<feature type="compositionally biased region" description="Basic and acidic residues" evidence="2">
    <location>
        <begin position="162"/>
        <end position="183"/>
    </location>
</feature>
<feature type="strand" evidence="3">
    <location>
        <begin position="4"/>
        <end position="12"/>
    </location>
</feature>
<feature type="turn" evidence="3">
    <location>
        <begin position="19"/>
        <end position="22"/>
    </location>
</feature>
<feature type="helix" evidence="3">
    <location>
        <begin position="26"/>
        <end position="29"/>
    </location>
</feature>
<feature type="helix" evidence="3">
    <location>
        <begin position="33"/>
        <end position="40"/>
    </location>
</feature>
<feature type="strand" evidence="3">
    <location>
        <begin position="42"/>
        <end position="48"/>
    </location>
</feature>
<feature type="helix" evidence="3">
    <location>
        <begin position="62"/>
        <end position="65"/>
    </location>
</feature>
<feature type="helix" evidence="3">
    <location>
        <begin position="70"/>
        <end position="73"/>
    </location>
</feature>
<feature type="helix" evidence="3">
    <location>
        <begin position="77"/>
        <end position="84"/>
    </location>
</feature>
<feature type="strand" evidence="3">
    <location>
        <begin position="94"/>
        <end position="110"/>
    </location>
</feature>
<feature type="helix" evidence="3">
    <location>
        <begin position="113"/>
        <end position="115"/>
    </location>
</feature>
<feature type="helix" evidence="3">
    <location>
        <begin position="120"/>
        <end position="126"/>
    </location>
</feature>
<feature type="strand" evidence="3">
    <location>
        <begin position="129"/>
        <end position="131"/>
    </location>
</feature>
<feature type="strand" evidence="3">
    <location>
        <begin position="134"/>
        <end position="140"/>
    </location>
</feature>
<feature type="strand" evidence="3">
    <location>
        <begin position="145"/>
        <end position="152"/>
    </location>
</feature>
<feature type="strand" evidence="3">
    <location>
        <begin position="176"/>
        <end position="178"/>
    </location>
</feature>
<feature type="helix" evidence="3">
    <location>
        <begin position="179"/>
        <end position="181"/>
    </location>
</feature>
<feature type="helix" evidence="3">
    <location>
        <begin position="182"/>
        <end position="200"/>
    </location>
</feature>
<feature type="helix" evidence="3">
    <location>
        <begin position="203"/>
        <end position="210"/>
    </location>
</feature>
<feature type="strand" evidence="3">
    <location>
        <begin position="218"/>
        <end position="226"/>
    </location>
</feature>
<feature type="helix" evidence="3">
    <location>
        <begin position="233"/>
        <end position="237"/>
    </location>
</feature>
<feature type="strand" evidence="3">
    <location>
        <begin position="241"/>
        <end position="244"/>
    </location>
</feature>
<feature type="helix" evidence="3">
    <location>
        <begin position="248"/>
        <end position="256"/>
    </location>
</feature>
<feature type="strand" evidence="3">
    <location>
        <begin position="260"/>
        <end position="262"/>
    </location>
</feature>
<feature type="helix" evidence="3">
    <location>
        <begin position="275"/>
        <end position="285"/>
    </location>
</feature>
<feature type="turn" evidence="3">
    <location>
        <begin position="286"/>
        <end position="288"/>
    </location>
</feature>
<feature type="strand" evidence="3">
    <location>
        <begin position="290"/>
        <end position="297"/>
    </location>
</feature>
<feature type="helix" evidence="3">
    <location>
        <begin position="308"/>
        <end position="320"/>
    </location>
</feature>
<feature type="helix" evidence="3">
    <location>
        <begin position="321"/>
        <end position="326"/>
    </location>
</feature>
<feature type="turn" evidence="3">
    <location>
        <begin position="329"/>
        <end position="331"/>
    </location>
</feature>
<feature type="strand" evidence="3">
    <location>
        <begin position="332"/>
        <end position="339"/>
    </location>
</feature>
<feature type="strand" evidence="3">
    <location>
        <begin position="354"/>
        <end position="360"/>
    </location>
</feature>
<feature type="turn" evidence="3">
    <location>
        <begin position="373"/>
        <end position="375"/>
    </location>
</feature>
<feature type="helix" evidence="3">
    <location>
        <begin position="376"/>
        <end position="378"/>
    </location>
</feature>
<feature type="strand" evidence="3">
    <location>
        <begin position="379"/>
        <end position="384"/>
    </location>
</feature>
<feature type="helix" evidence="3">
    <location>
        <begin position="385"/>
        <end position="387"/>
    </location>
</feature>
<feature type="helix" evidence="3">
    <location>
        <begin position="388"/>
        <end position="394"/>
    </location>
</feature>
<reference key="1">
    <citation type="journal article" date="2000" name="Nature">
        <title>The genome sequence of the thermoacidophilic scavenger Thermoplasma acidophilum.</title>
        <authorList>
            <person name="Ruepp A."/>
            <person name="Graml W."/>
            <person name="Santos-Martinez M.-L."/>
            <person name="Koretke K.K."/>
            <person name="Volker C."/>
            <person name="Mewes H.-W."/>
            <person name="Frishman D."/>
            <person name="Stocker S."/>
            <person name="Lupas A.N."/>
            <person name="Baumeister W."/>
        </authorList>
    </citation>
    <scope>NUCLEOTIDE SEQUENCE [LARGE SCALE GENOMIC DNA]</scope>
    <source>
        <strain>ATCC 25905 / DSM 1728 / JCM 9062 / NBRC 15155 / AMRC-C165</strain>
    </source>
</reference>
<organism>
    <name type="scientific">Thermoplasma acidophilum (strain ATCC 25905 / DSM 1728 / JCM 9062 / NBRC 15155 / AMRC-C165)</name>
    <dbReference type="NCBI Taxonomy" id="273075"/>
    <lineage>
        <taxon>Archaea</taxon>
        <taxon>Methanobacteriati</taxon>
        <taxon>Thermoplasmatota</taxon>
        <taxon>Thermoplasmata</taxon>
        <taxon>Thermoplasmatales</taxon>
        <taxon>Thermoplasmataceae</taxon>
        <taxon>Thermoplasma</taxon>
    </lineage>
</organism>
<accession>Q9HL27</accession>
<protein>
    <recommendedName>
        <fullName evidence="1">2,3-bisphosphoglycerate-independent phosphoglycerate mutase</fullName>
        <shortName evidence="1">BPG-independent PGAM</shortName>
        <shortName evidence="1">Phosphoglyceromutase</shortName>
        <shortName evidence="1">aPGAM</shortName>
        <ecNumber evidence="1">5.4.2.12</ecNumber>
    </recommendedName>
</protein>